<reference key="1">
    <citation type="journal article" date="2009" name="BMC Microbiol.">
        <title>The genome sequence of Geobacter metallireducens: features of metabolism, physiology and regulation common and dissimilar to Geobacter sulfurreducens.</title>
        <authorList>
            <person name="Aklujkar M."/>
            <person name="Krushkal J."/>
            <person name="DiBartolo G."/>
            <person name="Lapidus A."/>
            <person name="Land M.L."/>
            <person name="Lovley D.R."/>
        </authorList>
    </citation>
    <scope>NUCLEOTIDE SEQUENCE [LARGE SCALE GENOMIC DNA]</scope>
    <source>
        <strain>ATCC 53774 / DSM 7210 / GS-15</strain>
    </source>
</reference>
<evidence type="ECO:0000255" key="1">
    <source>
        <dbReference type="HAMAP-Rule" id="MF_00011"/>
    </source>
</evidence>
<organism>
    <name type="scientific">Geobacter metallireducens (strain ATCC 53774 / DSM 7210 / GS-15)</name>
    <dbReference type="NCBI Taxonomy" id="269799"/>
    <lineage>
        <taxon>Bacteria</taxon>
        <taxon>Pseudomonadati</taxon>
        <taxon>Thermodesulfobacteriota</taxon>
        <taxon>Desulfuromonadia</taxon>
        <taxon>Geobacterales</taxon>
        <taxon>Geobacteraceae</taxon>
        <taxon>Geobacter</taxon>
    </lineage>
</organism>
<protein>
    <recommendedName>
        <fullName evidence="1">Adenylosuccinate synthetase</fullName>
        <shortName evidence="1">AMPSase</shortName>
        <shortName evidence="1">AdSS</shortName>
        <ecNumber evidence="1">6.3.4.4</ecNumber>
    </recommendedName>
    <alternativeName>
        <fullName evidence="1">IMP--aspartate ligase</fullName>
    </alternativeName>
</protein>
<sequence length="430" mass="47280">MANVVVVGAQWGDEGKGKVVDIYTEHADDVVRYQGGNNAGHTLVVNGEKTVLHLIPSGILHKGKRCIIGNGVVLDPEVFIMEINRLKEKGRLQDDSALLVSESVHIIMPYHKQIDLAREAKSGDKKIGTTGRGIGPTYEDKIGRRGIRLMDLLDPEIFARKLRENLEEKNFILEKLLGEKPLSFDEIHKTYSGYADILRKYVANTSLILCKDIAAGKKLLFEGAQGTLLDVDHGTYPFVTSSSTCAGGACTGTGVGPRDIHEIIGISKAYVTRVGSGPFPTELLDADGEQLRQTGGEFGATTGRPRRCGWFDAMVVRFAVRVNGLTGVALTKLDVLNDFDTIKICTGYTYEGKPVEDLPANLAVFEKCQPVYEEMPGWKSDIRGVRRFEDLPEKARLYVHRLQELISCPIVLVSIGPGRDETITIRNPFA</sequence>
<feature type="chain" id="PRO_1000000828" description="Adenylosuccinate synthetase">
    <location>
        <begin position="1"/>
        <end position="430"/>
    </location>
</feature>
<feature type="active site" description="Proton acceptor" evidence="1">
    <location>
        <position position="13"/>
    </location>
</feature>
<feature type="active site" description="Proton donor" evidence="1">
    <location>
        <position position="41"/>
    </location>
</feature>
<feature type="binding site" evidence="1">
    <location>
        <begin position="12"/>
        <end position="18"/>
    </location>
    <ligand>
        <name>GTP</name>
        <dbReference type="ChEBI" id="CHEBI:37565"/>
    </ligand>
</feature>
<feature type="binding site" description="in other chain" evidence="1">
    <location>
        <begin position="13"/>
        <end position="16"/>
    </location>
    <ligand>
        <name>IMP</name>
        <dbReference type="ChEBI" id="CHEBI:58053"/>
        <note>ligand shared between dimeric partners</note>
    </ligand>
</feature>
<feature type="binding site" evidence="1">
    <location>
        <position position="13"/>
    </location>
    <ligand>
        <name>Mg(2+)</name>
        <dbReference type="ChEBI" id="CHEBI:18420"/>
    </ligand>
</feature>
<feature type="binding site" description="in other chain" evidence="1">
    <location>
        <begin position="38"/>
        <end position="41"/>
    </location>
    <ligand>
        <name>IMP</name>
        <dbReference type="ChEBI" id="CHEBI:58053"/>
        <note>ligand shared between dimeric partners</note>
    </ligand>
</feature>
<feature type="binding site" evidence="1">
    <location>
        <begin position="40"/>
        <end position="42"/>
    </location>
    <ligand>
        <name>GTP</name>
        <dbReference type="ChEBI" id="CHEBI:37565"/>
    </ligand>
</feature>
<feature type="binding site" evidence="1">
    <location>
        <position position="40"/>
    </location>
    <ligand>
        <name>Mg(2+)</name>
        <dbReference type="ChEBI" id="CHEBI:18420"/>
    </ligand>
</feature>
<feature type="binding site" description="in other chain" evidence="1">
    <location>
        <position position="130"/>
    </location>
    <ligand>
        <name>IMP</name>
        <dbReference type="ChEBI" id="CHEBI:58053"/>
        <note>ligand shared between dimeric partners</note>
    </ligand>
</feature>
<feature type="binding site" evidence="1">
    <location>
        <position position="144"/>
    </location>
    <ligand>
        <name>IMP</name>
        <dbReference type="ChEBI" id="CHEBI:58053"/>
        <note>ligand shared between dimeric partners</note>
    </ligand>
</feature>
<feature type="binding site" description="in other chain" evidence="1">
    <location>
        <position position="225"/>
    </location>
    <ligand>
        <name>IMP</name>
        <dbReference type="ChEBI" id="CHEBI:58053"/>
        <note>ligand shared between dimeric partners</note>
    </ligand>
</feature>
<feature type="binding site" description="in other chain" evidence="1">
    <location>
        <position position="240"/>
    </location>
    <ligand>
        <name>IMP</name>
        <dbReference type="ChEBI" id="CHEBI:58053"/>
        <note>ligand shared between dimeric partners</note>
    </ligand>
</feature>
<feature type="binding site" evidence="1">
    <location>
        <begin position="300"/>
        <end position="306"/>
    </location>
    <ligand>
        <name>substrate</name>
    </ligand>
</feature>
<feature type="binding site" description="in other chain" evidence="1">
    <location>
        <position position="304"/>
    </location>
    <ligand>
        <name>IMP</name>
        <dbReference type="ChEBI" id="CHEBI:58053"/>
        <note>ligand shared between dimeric partners</note>
    </ligand>
</feature>
<feature type="binding site" evidence="1">
    <location>
        <position position="306"/>
    </location>
    <ligand>
        <name>GTP</name>
        <dbReference type="ChEBI" id="CHEBI:37565"/>
    </ligand>
</feature>
<feature type="binding site" evidence="1">
    <location>
        <begin position="332"/>
        <end position="334"/>
    </location>
    <ligand>
        <name>GTP</name>
        <dbReference type="ChEBI" id="CHEBI:37565"/>
    </ligand>
</feature>
<feature type="binding site" evidence="1">
    <location>
        <begin position="414"/>
        <end position="416"/>
    </location>
    <ligand>
        <name>GTP</name>
        <dbReference type="ChEBI" id="CHEBI:37565"/>
    </ligand>
</feature>
<dbReference type="EC" id="6.3.4.4" evidence="1"/>
<dbReference type="EMBL" id="CP000148">
    <property type="protein sequence ID" value="ABB33473.1"/>
    <property type="molecule type" value="Genomic_DNA"/>
</dbReference>
<dbReference type="RefSeq" id="WP_004512698.1">
    <property type="nucleotide sequence ID" value="NC_007517.1"/>
</dbReference>
<dbReference type="SMR" id="Q39QK1"/>
<dbReference type="STRING" id="269799.Gmet_3260"/>
<dbReference type="KEGG" id="gme:Gmet_3260"/>
<dbReference type="eggNOG" id="COG0104">
    <property type="taxonomic scope" value="Bacteria"/>
</dbReference>
<dbReference type="HOGENOM" id="CLU_029848_0_0_7"/>
<dbReference type="UniPathway" id="UPA00075">
    <property type="reaction ID" value="UER00335"/>
</dbReference>
<dbReference type="Proteomes" id="UP000007073">
    <property type="component" value="Chromosome"/>
</dbReference>
<dbReference type="GO" id="GO:0005737">
    <property type="term" value="C:cytoplasm"/>
    <property type="evidence" value="ECO:0007669"/>
    <property type="project" value="UniProtKB-SubCell"/>
</dbReference>
<dbReference type="GO" id="GO:0004019">
    <property type="term" value="F:adenylosuccinate synthase activity"/>
    <property type="evidence" value="ECO:0007669"/>
    <property type="project" value="UniProtKB-UniRule"/>
</dbReference>
<dbReference type="GO" id="GO:0005525">
    <property type="term" value="F:GTP binding"/>
    <property type="evidence" value="ECO:0007669"/>
    <property type="project" value="UniProtKB-UniRule"/>
</dbReference>
<dbReference type="GO" id="GO:0000287">
    <property type="term" value="F:magnesium ion binding"/>
    <property type="evidence" value="ECO:0007669"/>
    <property type="project" value="UniProtKB-UniRule"/>
</dbReference>
<dbReference type="GO" id="GO:0044208">
    <property type="term" value="P:'de novo' AMP biosynthetic process"/>
    <property type="evidence" value="ECO:0007669"/>
    <property type="project" value="UniProtKB-UniRule"/>
</dbReference>
<dbReference type="GO" id="GO:0046040">
    <property type="term" value="P:IMP metabolic process"/>
    <property type="evidence" value="ECO:0007669"/>
    <property type="project" value="TreeGrafter"/>
</dbReference>
<dbReference type="CDD" id="cd03108">
    <property type="entry name" value="AdSS"/>
    <property type="match status" value="1"/>
</dbReference>
<dbReference type="FunFam" id="1.10.300.10:FF:000001">
    <property type="entry name" value="Adenylosuccinate synthetase"/>
    <property type="match status" value="1"/>
</dbReference>
<dbReference type="FunFam" id="3.90.170.10:FF:000001">
    <property type="entry name" value="Adenylosuccinate synthetase"/>
    <property type="match status" value="1"/>
</dbReference>
<dbReference type="Gene3D" id="3.40.440.10">
    <property type="entry name" value="Adenylosuccinate Synthetase, subunit A, domain 1"/>
    <property type="match status" value="1"/>
</dbReference>
<dbReference type="Gene3D" id="1.10.300.10">
    <property type="entry name" value="Adenylosuccinate Synthetase, subunit A, domain 2"/>
    <property type="match status" value="1"/>
</dbReference>
<dbReference type="Gene3D" id="3.90.170.10">
    <property type="entry name" value="Adenylosuccinate Synthetase, subunit A, domain 3"/>
    <property type="match status" value="1"/>
</dbReference>
<dbReference type="HAMAP" id="MF_00011">
    <property type="entry name" value="Adenylosucc_synth"/>
    <property type="match status" value="1"/>
</dbReference>
<dbReference type="InterPro" id="IPR018220">
    <property type="entry name" value="Adenylosuccin_syn_GTP-bd"/>
</dbReference>
<dbReference type="InterPro" id="IPR033128">
    <property type="entry name" value="Adenylosuccin_syn_Lys_AS"/>
</dbReference>
<dbReference type="InterPro" id="IPR042109">
    <property type="entry name" value="Adenylosuccinate_synth_dom1"/>
</dbReference>
<dbReference type="InterPro" id="IPR042110">
    <property type="entry name" value="Adenylosuccinate_synth_dom2"/>
</dbReference>
<dbReference type="InterPro" id="IPR042111">
    <property type="entry name" value="Adenylosuccinate_synth_dom3"/>
</dbReference>
<dbReference type="InterPro" id="IPR001114">
    <property type="entry name" value="Adenylosuccinate_synthetase"/>
</dbReference>
<dbReference type="InterPro" id="IPR027417">
    <property type="entry name" value="P-loop_NTPase"/>
</dbReference>
<dbReference type="NCBIfam" id="NF002223">
    <property type="entry name" value="PRK01117.1"/>
    <property type="match status" value="1"/>
</dbReference>
<dbReference type="NCBIfam" id="TIGR00184">
    <property type="entry name" value="purA"/>
    <property type="match status" value="1"/>
</dbReference>
<dbReference type="PANTHER" id="PTHR11846">
    <property type="entry name" value="ADENYLOSUCCINATE SYNTHETASE"/>
    <property type="match status" value="1"/>
</dbReference>
<dbReference type="PANTHER" id="PTHR11846:SF0">
    <property type="entry name" value="ADENYLOSUCCINATE SYNTHETASE"/>
    <property type="match status" value="1"/>
</dbReference>
<dbReference type="Pfam" id="PF00709">
    <property type="entry name" value="Adenylsucc_synt"/>
    <property type="match status" value="1"/>
</dbReference>
<dbReference type="SMART" id="SM00788">
    <property type="entry name" value="Adenylsucc_synt"/>
    <property type="match status" value="1"/>
</dbReference>
<dbReference type="SUPFAM" id="SSF52540">
    <property type="entry name" value="P-loop containing nucleoside triphosphate hydrolases"/>
    <property type="match status" value="1"/>
</dbReference>
<dbReference type="PROSITE" id="PS01266">
    <property type="entry name" value="ADENYLOSUCCIN_SYN_1"/>
    <property type="match status" value="1"/>
</dbReference>
<dbReference type="PROSITE" id="PS00513">
    <property type="entry name" value="ADENYLOSUCCIN_SYN_2"/>
    <property type="match status" value="1"/>
</dbReference>
<accession>Q39QK1</accession>
<gene>
    <name evidence="1" type="primary">purA</name>
    <name type="ordered locus">Gmet_3260</name>
</gene>
<proteinExistence type="inferred from homology"/>
<name>PURA_GEOMG</name>
<keyword id="KW-0963">Cytoplasm</keyword>
<keyword id="KW-0342">GTP-binding</keyword>
<keyword id="KW-0436">Ligase</keyword>
<keyword id="KW-0460">Magnesium</keyword>
<keyword id="KW-0479">Metal-binding</keyword>
<keyword id="KW-0547">Nucleotide-binding</keyword>
<keyword id="KW-0658">Purine biosynthesis</keyword>
<keyword id="KW-1185">Reference proteome</keyword>
<comment type="function">
    <text evidence="1">Plays an important role in the de novo pathway of purine nucleotide biosynthesis. Catalyzes the first committed step in the biosynthesis of AMP from IMP.</text>
</comment>
<comment type="catalytic activity">
    <reaction evidence="1">
        <text>IMP + L-aspartate + GTP = N(6)-(1,2-dicarboxyethyl)-AMP + GDP + phosphate + 2 H(+)</text>
        <dbReference type="Rhea" id="RHEA:15753"/>
        <dbReference type="ChEBI" id="CHEBI:15378"/>
        <dbReference type="ChEBI" id="CHEBI:29991"/>
        <dbReference type="ChEBI" id="CHEBI:37565"/>
        <dbReference type="ChEBI" id="CHEBI:43474"/>
        <dbReference type="ChEBI" id="CHEBI:57567"/>
        <dbReference type="ChEBI" id="CHEBI:58053"/>
        <dbReference type="ChEBI" id="CHEBI:58189"/>
        <dbReference type="EC" id="6.3.4.4"/>
    </reaction>
</comment>
<comment type="cofactor">
    <cofactor evidence="1">
        <name>Mg(2+)</name>
        <dbReference type="ChEBI" id="CHEBI:18420"/>
    </cofactor>
    <text evidence="1">Binds 1 Mg(2+) ion per subunit.</text>
</comment>
<comment type="pathway">
    <text evidence="1">Purine metabolism; AMP biosynthesis via de novo pathway; AMP from IMP: step 1/2.</text>
</comment>
<comment type="subunit">
    <text evidence="1">Homodimer.</text>
</comment>
<comment type="subcellular location">
    <subcellularLocation>
        <location evidence="1">Cytoplasm</location>
    </subcellularLocation>
</comment>
<comment type="similarity">
    <text evidence="1">Belongs to the adenylosuccinate synthetase family.</text>
</comment>